<accession>B8GRD3</accession>
<dbReference type="EC" id="3.1.26.5" evidence="1"/>
<dbReference type="EMBL" id="CP001339">
    <property type="protein sequence ID" value="ACL74387.1"/>
    <property type="molecule type" value="Genomic_DNA"/>
</dbReference>
<dbReference type="SMR" id="B8GRD3"/>
<dbReference type="STRING" id="396588.Tgr7_3320"/>
<dbReference type="KEGG" id="tgr:Tgr7_3320"/>
<dbReference type="eggNOG" id="COG0594">
    <property type="taxonomic scope" value="Bacteria"/>
</dbReference>
<dbReference type="HOGENOM" id="CLU_117179_11_0_6"/>
<dbReference type="OrthoDB" id="9796422at2"/>
<dbReference type="Proteomes" id="UP000002383">
    <property type="component" value="Chromosome"/>
</dbReference>
<dbReference type="GO" id="GO:0030677">
    <property type="term" value="C:ribonuclease P complex"/>
    <property type="evidence" value="ECO:0007669"/>
    <property type="project" value="TreeGrafter"/>
</dbReference>
<dbReference type="GO" id="GO:0042781">
    <property type="term" value="F:3'-tRNA processing endoribonuclease activity"/>
    <property type="evidence" value="ECO:0007669"/>
    <property type="project" value="TreeGrafter"/>
</dbReference>
<dbReference type="GO" id="GO:0004526">
    <property type="term" value="F:ribonuclease P activity"/>
    <property type="evidence" value="ECO:0007669"/>
    <property type="project" value="UniProtKB-UniRule"/>
</dbReference>
<dbReference type="GO" id="GO:0000049">
    <property type="term" value="F:tRNA binding"/>
    <property type="evidence" value="ECO:0007669"/>
    <property type="project" value="UniProtKB-UniRule"/>
</dbReference>
<dbReference type="GO" id="GO:0001682">
    <property type="term" value="P:tRNA 5'-leader removal"/>
    <property type="evidence" value="ECO:0007669"/>
    <property type="project" value="UniProtKB-UniRule"/>
</dbReference>
<dbReference type="Gene3D" id="3.30.230.10">
    <property type="match status" value="1"/>
</dbReference>
<dbReference type="HAMAP" id="MF_00227">
    <property type="entry name" value="RNase_P"/>
    <property type="match status" value="1"/>
</dbReference>
<dbReference type="InterPro" id="IPR020568">
    <property type="entry name" value="Ribosomal_Su5_D2-typ_SF"/>
</dbReference>
<dbReference type="InterPro" id="IPR014721">
    <property type="entry name" value="Ribsml_uS5_D2-typ_fold_subgr"/>
</dbReference>
<dbReference type="InterPro" id="IPR000100">
    <property type="entry name" value="RNase_P"/>
</dbReference>
<dbReference type="NCBIfam" id="TIGR00188">
    <property type="entry name" value="rnpA"/>
    <property type="match status" value="1"/>
</dbReference>
<dbReference type="PANTHER" id="PTHR33992">
    <property type="entry name" value="RIBONUCLEASE P PROTEIN COMPONENT"/>
    <property type="match status" value="1"/>
</dbReference>
<dbReference type="PANTHER" id="PTHR33992:SF1">
    <property type="entry name" value="RIBONUCLEASE P PROTEIN COMPONENT"/>
    <property type="match status" value="1"/>
</dbReference>
<dbReference type="Pfam" id="PF00825">
    <property type="entry name" value="Ribonuclease_P"/>
    <property type="match status" value="1"/>
</dbReference>
<dbReference type="SUPFAM" id="SSF54211">
    <property type="entry name" value="Ribosomal protein S5 domain 2-like"/>
    <property type="match status" value="1"/>
</dbReference>
<comment type="function">
    <text evidence="1">RNaseP catalyzes the removal of the 5'-leader sequence from pre-tRNA to produce the mature 5'-terminus. It can also cleave other RNA substrates such as 4.5S RNA. The protein component plays an auxiliary but essential role in vivo by binding to the 5'-leader sequence and broadening the substrate specificity of the ribozyme.</text>
</comment>
<comment type="catalytic activity">
    <reaction evidence="1">
        <text>Endonucleolytic cleavage of RNA, removing 5'-extranucleotides from tRNA precursor.</text>
        <dbReference type="EC" id="3.1.26.5"/>
    </reaction>
</comment>
<comment type="subunit">
    <text evidence="1">Consists of a catalytic RNA component (M1 or rnpB) and a protein subunit.</text>
</comment>
<comment type="similarity">
    <text evidence="1">Belongs to the RnpA family.</text>
</comment>
<gene>
    <name evidence="1" type="primary">rnpA</name>
    <name type="ordered locus">Tgr7_3320</name>
</gene>
<organism>
    <name type="scientific">Thioalkalivibrio sulfidiphilus (strain HL-EbGR7)</name>
    <dbReference type="NCBI Taxonomy" id="396588"/>
    <lineage>
        <taxon>Bacteria</taxon>
        <taxon>Pseudomonadati</taxon>
        <taxon>Pseudomonadota</taxon>
        <taxon>Gammaproteobacteria</taxon>
        <taxon>Chromatiales</taxon>
        <taxon>Ectothiorhodospiraceae</taxon>
        <taxon>Thioalkalivibrio</taxon>
    </lineage>
</organism>
<reference key="1">
    <citation type="journal article" date="2011" name="Stand. Genomic Sci.">
        <title>Complete genome sequence of 'Thioalkalivibrio sulfidophilus' HL-EbGr7.</title>
        <authorList>
            <person name="Muyzer G."/>
            <person name="Sorokin D.Y."/>
            <person name="Mavromatis K."/>
            <person name="Lapidus A."/>
            <person name="Clum A."/>
            <person name="Ivanova N."/>
            <person name="Pati A."/>
            <person name="d'Haeseleer P."/>
            <person name="Woyke T."/>
            <person name="Kyrpides N.C."/>
        </authorList>
    </citation>
    <scope>NUCLEOTIDE SEQUENCE [LARGE SCALE GENOMIC DNA]</scope>
    <source>
        <strain>HL-EbGR7</strain>
    </source>
</reference>
<evidence type="ECO:0000255" key="1">
    <source>
        <dbReference type="HAMAP-Rule" id="MF_00227"/>
    </source>
</evidence>
<keyword id="KW-0255">Endonuclease</keyword>
<keyword id="KW-0378">Hydrolase</keyword>
<keyword id="KW-0540">Nuclease</keyword>
<keyword id="KW-1185">Reference proteome</keyword>
<keyword id="KW-0694">RNA-binding</keyword>
<keyword id="KW-0819">tRNA processing</keyword>
<sequence length="120" mass="13717">MAVDQGFPRSVRLTRPEQYKQVFGDARKLSDAGFTLLVRDNDGDSARLGLAISKKCARRAVDRQRIKRLVRETFRQHRQHLAPVDVVVMCRPAVTGWDNARIRASLERFWARLSTPCANP</sequence>
<protein>
    <recommendedName>
        <fullName evidence="1">Ribonuclease P protein component</fullName>
        <shortName evidence="1">RNase P protein</shortName>
        <shortName evidence="1">RNaseP protein</shortName>
        <ecNumber evidence="1">3.1.26.5</ecNumber>
    </recommendedName>
    <alternativeName>
        <fullName evidence="1">Protein C5</fullName>
    </alternativeName>
</protein>
<feature type="chain" id="PRO_1000194682" description="Ribonuclease P protein component">
    <location>
        <begin position="1"/>
        <end position="120"/>
    </location>
</feature>
<proteinExistence type="inferred from homology"/>
<name>RNPA_THISH</name>